<feature type="chain" id="PRO_1000191336" description="Transcriptional regulator MraZ">
    <location>
        <begin position="1"/>
        <end position="152"/>
    </location>
</feature>
<feature type="domain" description="SpoVT-AbrB 1" evidence="2">
    <location>
        <begin position="5"/>
        <end position="52"/>
    </location>
</feature>
<feature type="domain" description="SpoVT-AbrB 2" evidence="2">
    <location>
        <begin position="81"/>
        <end position="124"/>
    </location>
</feature>
<sequence length="152" mass="17360">MFRGATLVNLDSKGRLSVPTRYREQLLENAAGQMVCTIDIHHPCLLLYPLPEWEIIEQKLSRLSSMNPVERRVQRLLLGHASECQMDGAGRLLIAPVLRQHAGLTKEVMLVGQFNKFELWDETTWHQQVKEDIDAEQLATGDLSERLQDLSL</sequence>
<proteinExistence type="inferred from homology"/>
<evidence type="ECO:0000255" key="1">
    <source>
        <dbReference type="HAMAP-Rule" id="MF_01008"/>
    </source>
</evidence>
<evidence type="ECO:0000255" key="2">
    <source>
        <dbReference type="PROSITE-ProRule" id="PRU01076"/>
    </source>
</evidence>
<comment type="function">
    <text evidence="1">Negatively regulates its own expression and that of the subsequent genes in the proximal part of the division and cell wall (dcw) gene cluster. Acts by binding directly to DNA. May also regulate the expression of genes outside the dcw cluster.</text>
</comment>
<comment type="subunit">
    <text evidence="1">Forms oligomers.</text>
</comment>
<comment type="subcellular location">
    <subcellularLocation>
        <location evidence="1">Cytoplasm</location>
        <location evidence="1">Nucleoid</location>
    </subcellularLocation>
</comment>
<comment type="similarity">
    <text evidence="1">Belongs to the MraZ family.</text>
</comment>
<accession>B2U286</accession>
<gene>
    <name evidence="1" type="primary">mraZ</name>
    <name type="ordered locus">SbBS512_E0074</name>
</gene>
<protein>
    <recommendedName>
        <fullName>Transcriptional regulator MraZ</fullName>
    </recommendedName>
</protein>
<organism>
    <name type="scientific">Shigella boydii serotype 18 (strain CDC 3083-94 / BS512)</name>
    <dbReference type="NCBI Taxonomy" id="344609"/>
    <lineage>
        <taxon>Bacteria</taxon>
        <taxon>Pseudomonadati</taxon>
        <taxon>Pseudomonadota</taxon>
        <taxon>Gammaproteobacteria</taxon>
        <taxon>Enterobacterales</taxon>
        <taxon>Enterobacteriaceae</taxon>
        <taxon>Shigella</taxon>
    </lineage>
</organism>
<keyword id="KW-0963">Cytoplasm</keyword>
<keyword id="KW-0238">DNA-binding</keyword>
<keyword id="KW-1185">Reference proteome</keyword>
<keyword id="KW-0677">Repeat</keyword>
<keyword id="KW-0678">Repressor</keyword>
<keyword id="KW-0804">Transcription</keyword>
<keyword id="KW-0805">Transcription regulation</keyword>
<name>MRAZ_SHIB3</name>
<reference key="1">
    <citation type="submission" date="2008-05" db="EMBL/GenBank/DDBJ databases">
        <title>Complete sequence of Shigella boydii serotype 18 strain BS512.</title>
        <authorList>
            <person name="Rasko D.A."/>
            <person name="Rosovitz M."/>
            <person name="Maurelli A.T."/>
            <person name="Myers G."/>
            <person name="Seshadri R."/>
            <person name="Cer R."/>
            <person name="Jiang L."/>
            <person name="Ravel J."/>
            <person name="Sebastian Y."/>
        </authorList>
    </citation>
    <scope>NUCLEOTIDE SEQUENCE [LARGE SCALE GENOMIC DNA]</scope>
    <source>
        <strain>CDC 3083-94 / BS512</strain>
    </source>
</reference>
<dbReference type="EMBL" id="CP001063">
    <property type="protein sequence ID" value="ACD07101.1"/>
    <property type="molecule type" value="Genomic_DNA"/>
</dbReference>
<dbReference type="RefSeq" id="WP_001295770.1">
    <property type="nucleotide sequence ID" value="NC_010658.1"/>
</dbReference>
<dbReference type="SMR" id="B2U286"/>
<dbReference type="STRING" id="344609.SbBS512_E0074"/>
<dbReference type="GeneID" id="75202102"/>
<dbReference type="KEGG" id="sbc:SbBS512_E0074"/>
<dbReference type="HOGENOM" id="CLU_107907_2_0_6"/>
<dbReference type="Proteomes" id="UP000001030">
    <property type="component" value="Chromosome"/>
</dbReference>
<dbReference type="GO" id="GO:0005737">
    <property type="term" value="C:cytoplasm"/>
    <property type="evidence" value="ECO:0007669"/>
    <property type="project" value="UniProtKB-UniRule"/>
</dbReference>
<dbReference type="GO" id="GO:0009295">
    <property type="term" value="C:nucleoid"/>
    <property type="evidence" value="ECO:0007669"/>
    <property type="project" value="UniProtKB-SubCell"/>
</dbReference>
<dbReference type="GO" id="GO:0003700">
    <property type="term" value="F:DNA-binding transcription factor activity"/>
    <property type="evidence" value="ECO:0007669"/>
    <property type="project" value="UniProtKB-UniRule"/>
</dbReference>
<dbReference type="GO" id="GO:0000976">
    <property type="term" value="F:transcription cis-regulatory region binding"/>
    <property type="evidence" value="ECO:0007669"/>
    <property type="project" value="TreeGrafter"/>
</dbReference>
<dbReference type="GO" id="GO:2000143">
    <property type="term" value="P:negative regulation of DNA-templated transcription initiation"/>
    <property type="evidence" value="ECO:0007669"/>
    <property type="project" value="TreeGrafter"/>
</dbReference>
<dbReference type="CDD" id="cd16321">
    <property type="entry name" value="MraZ_C"/>
    <property type="match status" value="1"/>
</dbReference>
<dbReference type="CDD" id="cd16320">
    <property type="entry name" value="MraZ_N"/>
    <property type="match status" value="1"/>
</dbReference>
<dbReference type="FunFam" id="3.40.1550.20:FF:000001">
    <property type="entry name" value="Transcriptional regulator MraZ"/>
    <property type="match status" value="1"/>
</dbReference>
<dbReference type="Gene3D" id="3.40.1550.20">
    <property type="entry name" value="Transcriptional regulator MraZ domain"/>
    <property type="match status" value="1"/>
</dbReference>
<dbReference type="HAMAP" id="MF_01008">
    <property type="entry name" value="MraZ"/>
    <property type="match status" value="1"/>
</dbReference>
<dbReference type="InterPro" id="IPR003444">
    <property type="entry name" value="MraZ"/>
</dbReference>
<dbReference type="InterPro" id="IPR035644">
    <property type="entry name" value="MraZ_C"/>
</dbReference>
<dbReference type="InterPro" id="IPR020603">
    <property type="entry name" value="MraZ_dom"/>
</dbReference>
<dbReference type="InterPro" id="IPR035642">
    <property type="entry name" value="MraZ_N"/>
</dbReference>
<dbReference type="InterPro" id="IPR038619">
    <property type="entry name" value="MraZ_sf"/>
</dbReference>
<dbReference type="InterPro" id="IPR007159">
    <property type="entry name" value="SpoVT-AbrB_dom"/>
</dbReference>
<dbReference type="InterPro" id="IPR037914">
    <property type="entry name" value="SpoVT-AbrB_sf"/>
</dbReference>
<dbReference type="NCBIfam" id="TIGR00242">
    <property type="entry name" value="division/cell wall cluster transcriptional repressor MraZ"/>
    <property type="match status" value="1"/>
</dbReference>
<dbReference type="PANTHER" id="PTHR34701">
    <property type="entry name" value="TRANSCRIPTIONAL REGULATOR MRAZ"/>
    <property type="match status" value="1"/>
</dbReference>
<dbReference type="PANTHER" id="PTHR34701:SF1">
    <property type="entry name" value="TRANSCRIPTIONAL REGULATOR MRAZ"/>
    <property type="match status" value="1"/>
</dbReference>
<dbReference type="Pfam" id="PF02381">
    <property type="entry name" value="MraZ"/>
    <property type="match status" value="2"/>
</dbReference>
<dbReference type="SUPFAM" id="SSF89447">
    <property type="entry name" value="AbrB/MazE/MraZ-like"/>
    <property type="match status" value="1"/>
</dbReference>
<dbReference type="PROSITE" id="PS51740">
    <property type="entry name" value="SPOVT_ABRB"/>
    <property type="match status" value="2"/>
</dbReference>